<accession>B1IQH1</accession>
<proteinExistence type="inferred from homology"/>
<protein>
    <recommendedName>
        <fullName evidence="1">Elongation factor Ts</fullName>
        <shortName evidence="1">EF-Ts</shortName>
    </recommendedName>
</protein>
<sequence length="283" mass="30423">MAEITASLVKELRERTGAGMMDCKKALTEANGDIELAIENMRKSGAIKAAKKAGNVAADGVIKTKIDGNYGIILEVNCQTDFVAKDAGFQAFADKVLDAAVAGKITDVEVLKAQFEEERVALVAKIGENINIRRVAALEGDVLGSYQHGARIGVLVAAKGADEELVKHIAMHVAASKPEFIKPEDVSAEVVEKEYQVQLDIAMQSGKPKEIAEKMVEGRMKKFTGEVSLTGQPFVMEPSKTVGQLLKEHNAEVTGFIRFEVGEGIEKVETDFAAEVAAMSKQS</sequence>
<reference key="1">
    <citation type="submission" date="2008-02" db="EMBL/GenBank/DDBJ databases">
        <title>Complete sequence of Escherichia coli C str. ATCC 8739.</title>
        <authorList>
            <person name="Copeland A."/>
            <person name="Lucas S."/>
            <person name="Lapidus A."/>
            <person name="Glavina del Rio T."/>
            <person name="Dalin E."/>
            <person name="Tice H."/>
            <person name="Bruce D."/>
            <person name="Goodwin L."/>
            <person name="Pitluck S."/>
            <person name="Kiss H."/>
            <person name="Brettin T."/>
            <person name="Detter J.C."/>
            <person name="Han C."/>
            <person name="Kuske C.R."/>
            <person name="Schmutz J."/>
            <person name="Larimer F."/>
            <person name="Land M."/>
            <person name="Hauser L."/>
            <person name="Kyrpides N."/>
            <person name="Mikhailova N."/>
            <person name="Ingram L."/>
            <person name="Richardson P."/>
        </authorList>
    </citation>
    <scope>NUCLEOTIDE SEQUENCE [LARGE SCALE GENOMIC DNA]</scope>
    <source>
        <strain>ATCC 8739 / DSM 1576 / NBRC 3972 / NCIMB 8545 / WDCM 00012 / Crooks</strain>
    </source>
</reference>
<gene>
    <name evidence="1" type="primary">tsf</name>
    <name type="ordered locus">EcolC_3490</name>
</gene>
<dbReference type="EMBL" id="CP000946">
    <property type="protein sequence ID" value="ACA79104.1"/>
    <property type="molecule type" value="Genomic_DNA"/>
</dbReference>
<dbReference type="RefSeq" id="WP_000818114.1">
    <property type="nucleotide sequence ID" value="NZ_MTFT01000035.1"/>
</dbReference>
<dbReference type="SMR" id="B1IQH1"/>
<dbReference type="GeneID" id="93777255"/>
<dbReference type="KEGG" id="ecl:EcolC_3490"/>
<dbReference type="HOGENOM" id="CLU_047155_0_2_6"/>
<dbReference type="GO" id="GO:0005737">
    <property type="term" value="C:cytoplasm"/>
    <property type="evidence" value="ECO:0007669"/>
    <property type="project" value="UniProtKB-SubCell"/>
</dbReference>
<dbReference type="GO" id="GO:0003746">
    <property type="term" value="F:translation elongation factor activity"/>
    <property type="evidence" value="ECO:0007669"/>
    <property type="project" value="UniProtKB-UniRule"/>
</dbReference>
<dbReference type="CDD" id="cd14275">
    <property type="entry name" value="UBA_EF-Ts"/>
    <property type="match status" value="1"/>
</dbReference>
<dbReference type="FunFam" id="1.10.286.20:FF:000001">
    <property type="entry name" value="Elongation factor Ts"/>
    <property type="match status" value="1"/>
</dbReference>
<dbReference type="FunFam" id="1.10.8.10:FF:000001">
    <property type="entry name" value="Elongation factor Ts"/>
    <property type="match status" value="1"/>
</dbReference>
<dbReference type="FunFam" id="3.30.479.20:FF:000001">
    <property type="entry name" value="Elongation factor Ts"/>
    <property type="match status" value="1"/>
</dbReference>
<dbReference type="Gene3D" id="1.10.286.20">
    <property type="match status" value="1"/>
</dbReference>
<dbReference type="Gene3D" id="1.10.8.10">
    <property type="entry name" value="DNA helicase RuvA subunit, C-terminal domain"/>
    <property type="match status" value="1"/>
</dbReference>
<dbReference type="Gene3D" id="3.30.479.20">
    <property type="entry name" value="Elongation factor Ts, dimerisation domain"/>
    <property type="match status" value="2"/>
</dbReference>
<dbReference type="HAMAP" id="MF_00050">
    <property type="entry name" value="EF_Ts"/>
    <property type="match status" value="1"/>
</dbReference>
<dbReference type="InterPro" id="IPR036402">
    <property type="entry name" value="EF-Ts_dimer_sf"/>
</dbReference>
<dbReference type="InterPro" id="IPR001816">
    <property type="entry name" value="Transl_elong_EFTs/EF1B"/>
</dbReference>
<dbReference type="InterPro" id="IPR014039">
    <property type="entry name" value="Transl_elong_EFTs/EF1B_dimer"/>
</dbReference>
<dbReference type="InterPro" id="IPR018101">
    <property type="entry name" value="Transl_elong_Ts_CS"/>
</dbReference>
<dbReference type="InterPro" id="IPR009060">
    <property type="entry name" value="UBA-like_sf"/>
</dbReference>
<dbReference type="NCBIfam" id="TIGR00116">
    <property type="entry name" value="tsf"/>
    <property type="match status" value="1"/>
</dbReference>
<dbReference type="PANTHER" id="PTHR11741">
    <property type="entry name" value="ELONGATION FACTOR TS"/>
    <property type="match status" value="1"/>
</dbReference>
<dbReference type="PANTHER" id="PTHR11741:SF0">
    <property type="entry name" value="ELONGATION FACTOR TS, MITOCHONDRIAL"/>
    <property type="match status" value="1"/>
</dbReference>
<dbReference type="Pfam" id="PF00889">
    <property type="entry name" value="EF_TS"/>
    <property type="match status" value="1"/>
</dbReference>
<dbReference type="SUPFAM" id="SSF54713">
    <property type="entry name" value="Elongation factor Ts (EF-Ts), dimerisation domain"/>
    <property type="match status" value="2"/>
</dbReference>
<dbReference type="SUPFAM" id="SSF46934">
    <property type="entry name" value="UBA-like"/>
    <property type="match status" value="1"/>
</dbReference>
<dbReference type="PROSITE" id="PS01126">
    <property type="entry name" value="EF_TS_1"/>
    <property type="match status" value="1"/>
</dbReference>
<dbReference type="PROSITE" id="PS01127">
    <property type="entry name" value="EF_TS_2"/>
    <property type="match status" value="1"/>
</dbReference>
<evidence type="ECO:0000255" key="1">
    <source>
        <dbReference type="HAMAP-Rule" id="MF_00050"/>
    </source>
</evidence>
<comment type="function">
    <text evidence="1">Associates with the EF-Tu.GDP complex and induces the exchange of GDP to GTP. It remains bound to the aminoacyl-tRNA.EF-Tu.GTP complex up to the GTP hydrolysis stage on the ribosome.</text>
</comment>
<comment type="subcellular location">
    <subcellularLocation>
        <location evidence="1">Cytoplasm</location>
    </subcellularLocation>
</comment>
<comment type="similarity">
    <text evidence="1">Belongs to the EF-Ts family.</text>
</comment>
<organism>
    <name type="scientific">Escherichia coli (strain ATCC 8739 / DSM 1576 / NBRC 3972 / NCIMB 8545 / WDCM 00012 / Crooks)</name>
    <dbReference type="NCBI Taxonomy" id="481805"/>
    <lineage>
        <taxon>Bacteria</taxon>
        <taxon>Pseudomonadati</taxon>
        <taxon>Pseudomonadota</taxon>
        <taxon>Gammaproteobacteria</taxon>
        <taxon>Enterobacterales</taxon>
        <taxon>Enterobacteriaceae</taxon>
        <taxon>Escherichia</taxon>
    </lineage>
</organism>
<name>EFTS_ECOLC</name>
<keyword id="KW-0963">Cytoplasm</keyword>
<keyword id="KW-0251">Elongation factor</keyword>
<keyword id="KW-0648">Protein biosynthesis</keyword>
<feature type="chain" id="PRO_1000074862" description="Elongation factor Ts">
    <location>
        <begin position="1"/>
        <end position="283"/>
    </location>
</feature>
<feature type="region of interest" description="Involved in Mg(2+) ion dislocation from EF-Tu" evidence="1">
    <location>
        <begin position="80"/>
        <end position="83"/>
    </location>
</feature>